<feature type="chain" id="PRO_1000049772" description="Small ribosomal subunit protein uS12">
    <location>
        <begin position="1"/>
        <end position="126"/>
    </location>
</feature>
<feature type="region of interest" description="Disordered" evidence="3">
    <location>
        <begin position="1"/>
        <end position="26"/>
    </location>
</feature>
<feature type="region of interest" description="Disordered" evidence="3">
    <location>
        <begin position="102"/>
        <end position="126"/>
    </location>
</feature>
<feature type="compositionally biased region" description="Basic residues" evidence="3">
    <location>
        <begin position="113"/>
        <end position="126"/>
    </location>
</feature>
<feature type="modified residue" description="3-methylthioaspartic acid" evidence="1">
    <location>
        <position position="89"/>
    </location>
</feature>
<reference key="1">
    <citation type="journal article" date="2010" name="Genome Biol. Evol.">
        <title>Continuing evolution of Burkholderia mallei through genome reduction and large-scale rearrangements.</title>
        <authorList>
            <person name="Losada L."/>
            <person name="Ronning C.M."/>
            <person name="DeShazer D."/>
            <person name="Woods D."/>
            <person name="Fedorova N."/>
            <person name="Kim H.S."/>
            <person name="Shabalina S.A."/>
            <person name="Pearson T.R."/>
            <person name="Brinkac L."/>
            <person name="Tan P."/>
            <person name="Nandi T."/>
            <person name="Crabtree J."/>
            <person name="Badger J."/>
            <person name="Beckstrom-Sternberg S."/>
            <person name="Saqib M."/>
            <person name="Schutzer S.E."/>
            <person name="Keim P."/>
            <person name="Nierman W.C."/>
        </authorList>
    </citation>
    <scope>NUCLEOTIDE SEQUENCE [LARGE SCALE GENOMIC DNA]</scope>
    <source>
        <strain>NCTC 10247</strain>
    </source>
</reference>
<keyword id="KW-0488">Methylation</keyword>
<keyword id="KW-0687">Ribonucleoprotein</keyword>
<keyword id="KW-0689">Ribosomal protein</keyword>
<keyword id="KW-0694">RNA-binding</keyword>
<keyword id="KW-0699">rRNA-binding</keyword>
<keyword id="KW-0820">tRNA-binding</keyword>
<gene>
    <name evidence="2" type="primary">rpsL</name>
    <name type="ordered locus">BMA10247_3473</name>
</gene>
<proteinExistence type="inferred from homology"/>
<dbReference type="EMBL" id="CP000548">
    <property type="protein sequence ID" value="ABO06188.1"/>
    <property type="molecule type" value="Genomic_DNA"/>
</dbReference>
<dbReference type="RefSeq" id="WP_004198362.1">
    <property type="nucleotide sequence ID" value="NZ_CP007802.1"/>
</dbReference>
<dbReference type="SMR" id="A3MRU9"/>
<dbReference type="GeneID" id="92980324"/>
<dbReference type="KEGG" id="bmaz:BM44_3046"/>
<dbReference type="KEGG" id="bmn:BMA10247_3473"/>
<dbReference type="PATRIC" id="fig|320389.8.peg.3418"/>
<dbReference type="GO" id="GO:0015935">
    <property type="term" value="C:small ribosomal subunit"/>
    <property type="evidence" value="ECO:0007669"/>
    <property type="project" value="InterPro"/>
</dbReference>
<dbReference type="GO" id="GO:0019843">
    <property type="term" value="F:rRNA binding"/>
    <property type="evidence" value="ECO:0007669"/>
    <property type="project" value="UniProtKB-UniRule"/>
</dbReference>
<dbReference type="GO" id="GO:0003735">
    <property type="term" value="F:structural constituent of ribosome"/>
    <property type="evidence" value="ECO:0007669"/>
    <property type="project" value="InterPro"/>
</dbReference>
<dbReference type="GO" id="GO:0000049">
    <property type="term" value="F:tRNA binding"/>
    <property type="evidence" value="ECO:0007669"/>
    <property type="project" value="UniProtKB-UniRule"/>
</dbReference>
<dbReference type="GO" id="GO:0006412">
    <property type="term" value="P:translation"/>
    <property type="evidence" value="ECO:0007669"/>
    <property type="project" value="UniProtKB-UniRule"/>
</dbReference>
<dbReference type="CDD" id="cd03368">
    <property type="entry name" value="Ribosomal_S12"/>
    <property type="match status" value="1"/>
</dbReference>
<dbReference type="FunFam" id="2.40.50.140:FF:000001">
    <property type="entry name" value="30S ribosomal protein S12"/>
    <property type="match status" value="1"/>
</dbReference>
<dbReference type="Gene3D" id="2.40.50.140">
    <property type="entry name" value="Nucleic acid-binding proteins"/>
    <property type="match status" value="1"/>
</dbReference>
<dbReference type="HAMAP" id="MF_00403_B">
    <property type="entry name" value="Ribosomal_uS12_B"/>
    <property type="match status" value="1"/>
</dbReference>
<dbReference type="InterPro" id="IPR012340">
    <property type="entry name" value="NA-bd_OB-fold"/>
</dbReference>
<dbReference type="InterPro" id="IPR006032">
    <property type="entry name" value="Ribosomal_uS12"/>
</dbReference>
<dbReference type="InterPro" id="IPR005679">
    <property type="entry name" value="Ribosomal_uS12_bac"/>
</dbReference>
<dbReference type="NCBIfam" id="TIGR00981">
    <property type="entry name" value="rpsL_bact"/>
    <property type="match status" value="1"/>
</dbReference>
<dbReference type="PANTHER" id="PTHR11652">
    <property type="entry name" value="30S RIBOSOMAL PROTEIN S12 FAMILY MEMBER"/>
    <property type="match status" value="1"/>
</dbReference>
<dbReference type="Pfam" id="PF00164">
    <property type="entry name" value="Ribosom_S12_S23"/>
    <property type="match status" value="1"/>
</dbReference>
<dbReference type="PIRSF" id="PIRSF002133">
    <property type="entry name" value="Ribosomal_S12/S23"/>
    <property type="match status" value="1"/>
</dbReference>
<dbReference type="PRINTS" id="PR01034">
    <property type="entry name" value="RIBOSOMALS12"/>
</dbReference>
<dbReference type="SUPFAM" id="SSF50249">
    <property type="entry name" value="Nucleic acid-binding proteins"/>
    <property type="match status" value="1"/>
</dbReference>
<dbReference type="PROSITE" id="PS00055">
    <property type="entry name" value="RIBOSOMAL_S12"/>
    <property type="match status" value="1"/>
</dbReference>
<accession>A3MRU9</accession>
<name>RS12_BURM7</name>
<protein>
    <recommendedName>
        <fullName evidence="2">Small ribosomal subunit protein uS12</fullName>
    </recommendedName>
    <alternativeName>
        <fullName evidence="4">30S ribosomal protein S12</fullName>
    </alternativeName>
</protein>
<sequence>MPTINQLVRKGRASETTKSKSPALQDCPQRRGVCTRVYTTTPKKPNSALRKVAKVRLTNGFEVISYIGGEGHNLQEHSVVLIRGGRVKDLPGVRYHMVRGSLDTQGVKDRRQARSKYGAKRAKAAK</sequence>
<comment type="function">
    <text evidence="2">With S4 and S5 plays an important role in translational accuracy.</text>
</comment>
<comment type="function">
    <text evidence="2">Interacts with and stabilizes bases of the 16S rRNA that are involved in tRNA selection in the A site and with the mRNA backbone. Located at the interface of the 30S and 50S subunits, it traverses the body of the 30S subunit contacting proteins on the other side and probably holding the rRNA structure together. The combined cluster of proteins S8, S12 and S17 appears to hold together the shoulder and platform of the 30S subunit.</text>
</comment>
<comment type="subunit">
    <text evidence="2">Part of the 30S ribosomal subunit. Contacts proteins S8 and S17. May interact with IF1 in the 30S initiation complex.</text>
</comment>
<comment type="similarity">
    <text evidence="2">Belongs to the universal ribosomal protein uS12 family.</text>
</comment>
<organism>
    <name type="scientific">Burkholderia mallei (strain NCTC 10247)</name>
    <dbReference type="NCBI Taxonomy" id="320389"/>
    <lineage>
        <taxon>Bacteria</taxon>
        <taxon>Pseudomonadati</taxon>
        <taxon>Pseudomonadota</taxon>
        <taxon>Betaproteobacteria</taxon>
        <taxon>Burkholderiales</taxon>
        <taxon>Burkholderiaceae</taxon>
        <taxon>Burkholderia</taxon>
        <taxon>pseudomallei group</taxon>
    </lineage>
</organism>
<evidence type="ECO:0000250" key="1"/>
<evidence type="ECO:0000255" key="2">
    <source>
        <dbReference type="HAMAP-Rule" id="MF_00403"/>
    </source>
</evidence>
<evidence type="ECO:0000256" key="3">
    <source>
        <dbReference type="SAM" id="MobiDB-lite"/>
    </source>
</evidence>
<evidence type="ECO:0000305" key="4"/>